<dbReference type="EMBL" id="AF172839">
    <property type="protein sequence ID" value="AAG27931.1"/>
    <property type="molecule type" value="Genomic_DNA"/>
</dbReference>
<dbReference type="SMR" id="Q9GAW0"/>
<dbReference type="GO" id="GO:0005743">
    <property type="term" value="C:mitochondrial inner membrane"/>
    <property type="evidence" value="ECO:0007669"/>
    <property type="project" value="UniProtKB-SubCell"/>
</dbReference>
<dbReference type="GO" id="GO:0045275">
    <property type="term" value="C:respiratory chain complex III"/>
    <property type="evidence" value="ECO:0007669"/>
    <property type="project" value="InterPro"/>
</dbReference>
<dbReference type="GO" id="GO:0046872">
    <property type="term" value="F:metal ion binding"/>
    <property type="evidence" value="ECO:0007669"/>
    <property type="project" value="UniProtKB-KW"/>
</dbReference>
<dbReference type="GO" id="GO:0008121">
    <property type="term" value="F:ubiquinol-cytochrome-c reductase activity"/>
    <property type="evidence" value="ECO:0007669"/>
    <property type="project" value="InterPro"/>
</dbReference>
<dbReference type="GO" id="GO:0006122">
    <property type="term" value="P:mitochondrial electron transport, ubiquinol to cytochrome c"/>
    <property type="evidence" value="ECO:0007669"/>
    <property type="project" value="TreeGrafter"/>
</dbReference>
<dbReference type="CDD" id="cd00290">
    <property type="entry name" value="cytochrome_b_C"/>
    <property type="match status" value="1"/>
</dbReference>
<dbReference type="CDD" id="cd00284">
    <property type="entry name" value="Cytochrome_b_N"/>
    <property type="match status" value="1"/>
</dbReference>
<dbReference type="FunFam" id="1.20.810.10:FF:000002">
    <property type="entry name" value="Cytochrome b"/>
    <property type="match status" value="1"/>
</dbReference>
<dbReference type="Gene3D" id="1.20.810.10">
    <property type="entry name" value="Cytochrome Bc1 Complex, Chain C"/>
    <property type="match status" value="1"/>
</dbReference>
<dbReference type="InterPro" id="IPR005798">
    <property type="entry name" value="Cyt_b/b6_C"/>
</dbReference>
<dbReference type="InterPro" id="IPR036150">
    <property type="entry name" value="Cyt_b/b6_C_sf"/>
</dbReference>
<dbReference type="InterPro" id="IPR005797">
    <property type="entry name" value="Cyt_b/b6_N"/>
</dbReference>
<dbReference type="InterPro" id="IPR027387">
    <property type="entry name" value="Cytb/b6-like_sf"/>
</dbReference>
<dbReference type="InterPro" id="IPR030689">
    <property type="entry name" value="Cytochrome_b"/>
</dbReference>
<dbReference type="InterPro" id="IPR048260">
    <property type="entry name" value="Cytochrome_b_C_euk/bac"/>
</dbReference>
<dbReference type="InterPro" id="IPR048259">
    <property type="entry name" value="Cytochrome_b_N_euk/bac"/>
</dbReference>
<dbReference type="InterPro" id="IPR016174">
    <property type="entry name" value="Di-haem_cyt_TM"/>
</dbReference>
<dbReference type="PANTHER" id="PTHR19271">
    <property type="entry name" value="CYTOCHROME B"/>
    <property type="match status" value="1"/>
</dbReference>
<dbReference type="PANTHER" id="PTHR19271:SF16">
    <property type="entry name" value="CYTOCHROME B"/>
    <property type="match status" value="1"/>
</dbReference>
<dbReference type="Pfam" id="PF00032">
    <property type="entry name" value="Cytochrom_B_C"/>
    <property type="match status" value="1"/>
</dbReference>
<dbReference type="Pfam" id="PF00033">
    <property type="entry name" value="Cytochrome_B"/>
    <property type="match status" value="1"/>
</dbReference>
<dbReference type="PIRSF" id="PIRSF038885">
    <property type="entry name" value="COB"/>
    <property type="match status" value="1"/>
</dbReference>
<dbReference type="SUPFAM" id="SSF81648">
    <property type="entry name" value="a domain/subunit of cytochrome bc1 complex (Ubiquinol-cytochrome c reductase)"/>
    <property type="match status" value="1"/>
</dbReference>
<dbReference type="SUPFAM" id="SSF81342">
    <property type="entry name" value="Transmembrane di-heme cytochromes"/>
    <property type="match status" value="1"/>
</dbReference>
<dbReference type="PROSITE" id="PS51003">
    <property type="entry name" value="CYTB_CTER"/>
    <property type="match status" value="1"/>
</dbReference>
<dbReference type="PROSITE" id="PS51002">
    <property type="entry name" value="CYTB_NTER"/>
    <property type="match status" value="1"/>
</dbReference>
<organism>
    <name type="scientific">Dipodomys nelsoni</name>
    <name type="common">Nelson's kangaroo rat</name>
    <dbReference type="NCBI Taxonomy" id="108145"/>
    <lineage>
        <taxon>Eukaryota</taxon>
        <taxon>Metazoa</taxon>
        <taxon>Chordata</taxon>
        <taxon>Craniata</taxon>
        <taxon>Vertebrata</taxon>
        <taxon>Euteleostomi</taxon>
        <taxon>Mammalia</taxon>
        <taxon>Eutheria</taxon>
        <taxon>Euarchontoglires</taxon>
        <taxon>Glires</taxon>
        <taxon>Rodentia</taxon>
        <taxon>Castorimorpha</taxon>
        <taxon>Heteromyidae</taxon>
        <taxon>Dipodomyinae</taxon>
        <taxon>Dipodomys</taxon>
    </lineage>
</organism>
<protein>
    <recommendedName>
        <fullName>Cytochrome b</fullName>
    </recommendedName>
    <alternativeName>
        <fullName>Complex III subunit 3</fullName>
    </alternativeName>
    <alternativeName>
        <fullName>Complex III subunit III</fullName>
    </alternativeName>
    <alternativeName>
        <fullName>Cytochrome b-c1 complex subunit 3</fullName>
    </alternativeName>
    <alternativeName>
        <fullName>Ubiquinol-cytochrome-c reductase complex cytochrome b subunit</fullName>
    </alternativeName>
</protein>
<geneLocation type="mitochondrion"/>
<name>CYB_DIPNE</name>
<proteinExistence type="inferred from homology"/>
<reference key="1">
    <citation type="journal article" date="2000" name="J. Mammal.">
        <title>Molecular systematics of Dipodomys elator (Rodentia: Heteromyidae) and its phylogeographic implications.</title>
        <authorList>
            <person name="Mantooth S.J."/>
            <person name="Jones C."/>
            <person name="Bradley R.D."/>
        </authorList>
    </citation>
    <scope>NUCLEOTIDE SEQUENCE [GENOMIC DNA]</scope>
    <source>
        <strain>Isolate Dn16505</strain>
    </source>
</reference>
<keyword id="KW-0249">Electron transport</keyword>
<keyword id="KW-0349">Heme</keyword>
<keyword id="KW-0408">Iron</keyword>
<keyword id="KW-0472">Membrane</keyword>
<keyword id="KW-0479">Metal-binding</keyword>
<keyword id="KW-0496">Mitochondrion</keyword>
<keyword id="KW-0999">Mitochondrion inner membrane</keyword>
<keyword id="KW-0679">Respiratory chain</keyword>
<keyword id="KW-0812">Transmembrane</keyword>
<keyword id="KW-1133">Transmembrane helix</keyword>
<keyword id="KW-0813">Transport</keyword>
<keyword id="KW-0830">Ubiquinone</keyword>
<gene>
    <name type="primary">MT-CYB</name>
    <name type="synonym">COB</name>
    <name type="synonym">CYTB</name>
    <name type="synonym">MTCYB</name>
</gene>
<sequence>MTILRKSHPLMKMVNHAFIDLPAPSNISGWWNFGSLLGLCLIIQIASGLFLDMHYTSDTLTAFSSVAHICRDVNYGWLIRYIHANGASLFFVCLYLHIGRGIYYGSYSYKETWNIGIILLFLTMATAFMGYVLPWGQMSFWGATVITNLLSAIPYIGTDLVEWIWGGFSVDKATLNRFFAFHFILPFIIAAMAMVHLLFLHETGSNNPLGIPSNCDKIPFHPYYTTKDFLGIVLLLTFFFTMVPFFPDLLGDPDNYSPANPLNTPPHIKPEWYFLFAYAILRSIPNKLGGVIALILSILILALLPHIQTASQRSLMFRPISQFLFWLLVSDVLVLTWIGGQPVEPPFIIIGQIASLSYFTIILVLMPIAGINENKMLKW</sequence>
<evidence type="ECO:0000250" key="1"/>
<evidence type="ECO:0000250" key="2">
    <source>
        <dbReference type="UniProtKB" id="P00157"/>
    </source>
</evidence>
<evidence type="ECO:0000255" key="3">
    <source>
        <dbReference type="PROSITE-ProRule" id="PRU00967"/>
    </source>
</evidence>
<evidence type="ECO:0000255" key="4">
    <source>
        <dbReference type="PROSITE-ProRule" id="PRU00968"/>
    </source>
</evidence>
<accession>Q9GAW0</accession>
<feature type="chain" id="PRO_0000060889" description="Cytochrome b">
    <location>
        <begin position="1"/>
        <end position="379"/>
    </location>
</feature>
<feature type="transmembrane region" description="Helical" evidence="2">
    <location>
        <begin position="33"/>
        <end position="53"/>
    </location>
</feature>
<feature type="transmembrane region" description="Helical" evidence="2">
    <location>
        <begin position="77"/>
        <end position="98"/>
    </location>
</feature>
<feature type="transmembrane region" description="Helical" evidence="2">
    <location>
        <begin position="113"/>
        <end position="133"/>
    </location>
</feature>
<feature type="transmembrane region" description="Helical" evidence="2">
    <location>
        <begin position="178"/>
        <end position="198"/>
    </location>
</feature>
<feature type="transmembrane region" description="Helical" evidence="2">
    <location>
        <begin position="226"/>
        <end position="246"/>
    </location>
</feature>
<feature type="transmembrane region" description="Helical" evidence="2">
    <location>
        <begin position="288"/>
        <end position="308"/>
    </location>
</feature>
<feature type="transmembrane region" description="Helical" evidence="2">
    <location>
        <begin position="320"/>
        <end position="340"/>
    </location>
</feature>
<feature type="transmembrane region" description="Helical" evidence="2">
    <location>
        <begin position="347"/>
        <end position="367"/>
    </location>
</feature>
<feature type="binding site" description="axial binding residue" evidence="2">
    <location>
        <position position="83"/>
    </location>
    <ligand>
        <name>heme b</name>
        <dbReference type="ChEBI" id="CHEBI:60344"/>
        <label>b562</label>
    </ligand>
    <ligandPart>
        <name>Fe</name>
        <dbReference type="ChEBI" id="CHEBI:18248"/>
    </ligandPart>
</feature>
<feature type="binding site" description="axial binding residue" evidence="2">
    <location>
        <position position="97"/>
    </location>
    <ligand>
        <name>heme b</name>
        <dbReference type="ChEBI" id="CHEBI:60344"/>
        <label>b566</label>
    </ligand>
    <ligandPart>
        <name>Fe</name>
        <dbReference type="ChEBI" id="CHEBI:18248"/>
    </ligandPart>
</feature>
<feature type="binding site" description="axial binding residue" evidence="2">
    <location>
        <position position="182"/>
    </location>
    <ligand>
        <name>heme b</name>
        <dbReference type="ChEBI" id="CHEBI:60344"/>
        <label>b562</label>
    </ligand>
    <ligandPart>
        <name>Fe</name>
        <dbReference type="ChEBI" id="CHEBI:18248"/>
    </ligandPart>
</feature>
<feature type="binding site" description="axial binding residue" evidence="2">
    <location>
        <position position="196"/>
    </location>
    <ligand>
        <name>heme b</name>
        <dbReference type="ChEBI" id="CHEBI:60344"/>
        <label>b566</label>
    </ligand>
    <ligandPart>
        <name>Fe</name>
        <dbReference type="ChEBI" id="CHEBI:18248"/>
    </ligandPart>
</feature>
<feature type="binding site" evidence="2">
    <location>
        <position position="201"/>
    </location>
    <ligand>
        <name>a ubiquinone</name>
        <dbReference type="ChEBI" id="CHEBI:16389"/>
    </ligand>
</feature>
<comment type="function">
    <text evidence="2">Component of the ubiquinol-cytochrome c reductase complex (complex III or cytochrome b-c1 complex) that is part of the mitochondrial respiratory chain. The b-c1 complex mediates electron transfer from ubiquinol to cytochrome c. Contributes to the generation of a proton gradient across the mitochondrial membrane that is then used for ATP synthesis.</text>
</comment>
<comment type="cofactor">
    <cofactor evidence="2">
        <name>heme b</name>
        <dbReference type="ChEBI" id="CHEBI:60344"/>
    </cofactor>
    <text evidence="2">Binds 2 heme b groups non-covalently.</text>
</comment>
<comment type="subunit">
    <text evidence="2">The cytochrome bc1 complex contains 11 subunits: 3 respiratory subunits (MT-CYB, CYC1 and UQCRFS1), 2 core proteins (UQCRC1 and UQCRC2) and 6 low-molecular weight proteins (UQCRH/QCR6, UQCRB/QCR7, UQCRQ/QCR8, UQCR10/QCR9, UQCR11/QCR10 and a cleavage product of UQCRFS1). This cytochrome bc1 complex then forms a dimer.</text>
</comment>
<comment type="subcellular location">
    <subcellularLocation>
        <location evidence="2">Mitochondrion inner membrane</location>
        <topology evidence="2">Multi-pass membrane protein</topology>
    </subcellularLocation>
</comment>
<comment type="miscellaneous">
    <text evidence="1">Heme 1 (or BL or b562) is low-potential and absorbs at about 562 nm, and heme 2 (or BH or b566) is high-potential and absorbs at about 566 nm.</text>
</comment>
<comment type="similarity">
    <text evidence="3 4">Belongs to the cytochrome b family.</text>
</comment>
<comment type="caution">
    <text evidence="2">The full-length protein contains only eight transmembrane helices, not nine as predicted by bioinformatics tools.</text>
</comment>